<reference evidence="2" key="1">
    <citation type="journal article" date="2007" name="Arch. Insect Biochem. Physiol.">
        <title>Isolation and functional analysis of a 24-residue linear alpha-helical antimicrobial peptide from Korean blackish cicada, Cryptotympana dubia (Homoptera).</title>
        <authorList>
            <person name="Park D.-S."/>
            <person name="Leem J.Y."/>
            <person name="Suh E.Y."/>
            <person name="Hur J.H."/>
            <person name="Oh H.-W."/>
            <person name="Park H.-Y."/>
        </authorList>
    </citation>
    <scope>PROTEIN SEQUENCE</scope>
    <scope>FUNCTION</scope>
    <scope>MASS SPECTROMETRY</scope>
</reference>
<feature type="peptide" id="PRO_0000320210" description="Cryptonin" evidence="1">
    <location>
        <begin position="1"/>
        <end position="24"/>
    </location>
</feature>
<sequence>GLLNGLALRLGKRALKKIIKRLCR</sequence>
<protein>
    <recommendedName>
        <fullName>Cryptonin</fullName>
    </recommendedName>
</protein>
<proteinExistence type="evidence at protein level"/>
<dbReference type="GO" id="GO:0042742">
    <property type="term" value="P:defense response to bacterium"/>
    <property type="evidence" value="ECO:0007669"/>
    <property type="project" value="UniProtKB-KW"/>
</dbReference>
<dbReference type="GO" id="GO:0050832">
    <property type="term" value="P:defense response to fungus"/>
    <property type="evidence" value="ECO:0007669"/>
    <property type="project" value="UniProtKB-KW"/>
</dbReference>
<dbReference type="GO" id="GO:0031640">
    <property type="term" value="P:killing of cells of another organism"/>
    <property type="evidence" value="ECO:0007669"/>
    <property type="project" value="UniProtKB-KW"/>
</dbReference>
<evidence type="ECO:0000269" key="1">
    <source>
    </source>
</evidence>
<evidence type="ECO:0000305" key="2"/>
<comment type="function">
    <text evidence="1">Antimicrobial peptide, active against the Gram-negative bacterium E.coli K12-594 (MIC=3.12 ug/ml), the Gram-positive bacteria B.subtilis KCTC 3086 (MIC=3.12 ug/ml), S.aureus KCTC 1928 (MIC=25 ug/ml) and M.luteus KCTC 3063 (MIC=1.56 ug/ml), the antibiotic resistant bacteria methicillin-resistant S.aureus (MRSA) (MIC=25 ug/ml) and vancomycin-resistant Enterococci (VRE) (MIC=25 ug/ml), and the fungi C.albicans KCTC 7965 (MIC=50 ug/ml) and C.tropicalis KCTC 1925 (MIC=3.12 ug/ml). Has very low hemolytic activity on rat erythrocytes.</text>
</comment>
<comment type="mass spectrometry"/>
<keyword id="KW-0044">Antibiotic</keyword>
<keyword id="KW-0929">Antimicrobial</keyword>
<keyword id="KW-0204">Cytolysis</keyword>
<keyword id="KW-0903">Direct protein sequencing</keyword>
<keyword id="KW-0295">Fungicide</keyword>
<keyword id="KW-0354">Hemolysis</keyword>
<accession>P85028</accession>
<organism>
    <name type="scientific">Cryptotympana dubia</name>
    <name type="common">Korean horse cicada</name>
    <dbReference type="NCBI Taxonomy" id="407121"/>
    <lineage>
        <taxon>Eukaryota</taxon>
        <taxon>Metazoa</taxon>
        <taxon>Ecdysozoa</taxon>
        <taxon>Arthropoda</taxon>
        <taxon>Hexapoda</taxon>
        <taxon>Insecta</taxon>
        <taxon>Pterygota</taxon>
        <taxon>Neoptera</taxon>
        <taxon>Paraneoptera</taxon>
        <taxon>Hemiptera</taxon>
        <taxon>Auchenorrhyncha</taxon>
        <taxon>Cicadoidea</taxon>
        <taxon>Cicadidae</taxon>
        <taxon>Cicadinae</taxon>
        <taxon>Cryptotympanini</taxon>
        <taxon>Cryptotympana</taxon>
    </lineage>
</organism>
<name>CRYPT_CRYDU</name>